<evidence type="ECO:0000250" key="1">
    <source>
        <dbReference type="UniProtKB" id="Q80T85"/>
    </source>
</evidence>
<evidence type="ECO:0000256" key="2">
    <source>
        <dbReference type="SAM" id="MobiDB-lite"/>
    </source>
</evidence>
<evidence type="ECO:0000269" key="3">
    <source>
    </source>
</evidence>
<evidence type="ECO:0000269" key="4">
    <source>
    </source>
</evidence>
<evidence type="ECO:0000269" key="5">
    <source>
    </source>
</evidence>
<evidence type="ECO:0000269" key="6">
    <source>
    </source>
</evidence>
<evidence type="ECO:0000269" key="7">
    <source>
    </source>
</evidence>
<evidence type="ECO:0000303" key="8">
    <source>
    </source>
</evidence>
<evidence type="ECO:0000305" key="9"/>
<evidence type="ECO:0007744" key="10">
    <source>
    </source>
</evidence>
<evidence type="ECO:0007744" key="11">
    <source>
    </source>
</evidence>
<evidence type="ECO:0007744" key="12">
    <source>
    </source>
</evidence>
<evidence type="ECO:0007829" key="13">
    <source>
        <dbReference type="PDB" id="8TL6"/>
    </source>
</evidence>
<accession>Q96JK2</accession>
<accession>B2RN31</accession>
<accession>G3V4J7</accession>
<accession>O60559</accession>
<accession>Q8N3V3</accession>
<accession>Q8N3V5</accession>
<keyword id="KW-0002">3D-structure</keyword>
<keyword id="KW-0025">Alternative splicing</keyword>
<keyword id="KW-0597">Phosphoprotein</keyword>
<keyword id="KW-1267">Proteomics identification</keyword>
<keyword id="KW-1185">Reference proteome</keyword>
<keyword id="KW-0677">Repeat</keyword>
<keyword id="KW-0833">Ubl conjugation pathway</keyword>
<keyword id="KW-0853">WD repeat</keyword>
<comment type="function">
    <text evidence="3 4 5 6">Is a substrate receptor for the CUL4-DDB1 E3 ubiquitin-protein ligase complex (CRL4) (PubMed:29691401, PubMed:30442713). The complex CRL4-DCAF5 is involved in the ubiquitination of a set of methylated non-histone proteins, including SOX2, DNMT1 and E2F1 (PubMed:29691401, PubMed:30442713).</text>
</comment>
<comment type="pathway">
    <text>Protein modification; protein ubiquitination.</text>
</comment>
<comment type="subunit">
    <text evidence="1 3 5">Interacts with DDB1, CUL4A or CUL4B (PubMed:29691401). Interacts with L3MBTL3 (PubMed:29691401). Interacts with DNMT1 (PubMed:29691401). Interacts with E2F1 (PubMed:29691401). Interacts with SOX2 (By similarity).</text>
</comment>
<comment type="interaction">
    <interactant intactId="EBI-3253159">
        <id>Q96JK2</id>
    </interactant>
    <interactant intactId="EBI-350322">
        <id>Q16531</id>
        <label>DDB1</label>
    </interactant>
    <organismsDiffer>false</organismsDiffer>
    <experiments>2</experiments>
</comment>
<comment type="interaction">
    <interactant intactId="EBI-3253159">
        <id>Q96JK2</id>
    </interactant>
    <interactant intactId="EBI-719459">
        <id>P26358</id>
        <label>DNMT1</label>
    </interactant>
    <organismsDiffer>false</organismsDiffer>
    <experiments>5</experiments>
</comment>
<comment type="interaction">
    <interactant intactId="EBI-3253159">
        <id>Q96JK2</id>
    </interactant>
    <interactant intactId="EBI-2686809">
        <id>Q96JM7</id>
        <label>L3MBTL3</label>
    </interactant>
    <organismsDiffer>false</organismsDiffer>
    <experiments>4</experiments>
</comment>
<comment type="alternative products">
    <event type="alternative splicing"/>
    <isoform>
        <id>Q96JK2-1</id>
        <name>1</name>
        <sequence type="displayed"/>
    </isoform>
    <isoform>
        <id>Q96JK2-2</id>
        <name>2</name>
        <sequence type="described" ref="VSP_010386"/>
    </isoform>
    <isoform>
        <id>Q96JK2-3</id>
        <name>3</name>
        <sequence type="described" ref="VSP_055647"/>
    </isoform>
</comment>
<comment type="tissue specificity">
    <text evidence="7">Ubiquitous.</text>
</comment>
<comment type="sequence caution" evidence="9">
    <conflict type="frameshift">
        <sequence resource="EMBL-CDS" id="AAC08965"/>
    </conflict>
</comment>
<comment type="sequence caution" evidence="9">
    <conflict type="erroneous initiation">
        <sequence resource="EMBL-CDS" id="BAB47453"/>
    </conflict>
</comment>
<organism>
    <name type="scientific">Homo sapiens</name>
    <name type="common">Human</name>
    <dbReference type="NCBI Taxonomy" id="9606"/>
    <lineage>
        <taxon>Eukaryota</taxon>
        <taxon>Metazoa</taxon>
        <taxon>Chordata</taxon>
        <taxon>Craniata</taxon>
        <taxon>Vertebrata</taxon>
        <taxon>Euteleostomi</taxon>
        <taxon>Mammalia</taxon>
        <taxon>Eutheria</taxon>
        <taxon>Euarchontoglires</taxon>
        <taxon>Primates</taxon>
        <taxon>Haplorrhini</taxon>
        <taxon>Catarrhini</taxon>
        <taxon>Hominidae</taxon>
        <taxon>Homo</taxon>
    </lineage>
</organism>
<reference key="1">
    <citation type="journal article" date="2001" name="DNA Res.">
        <title>Prediction of the coding sequences of unidentified human genes. XX. The complete sequences of 100 new cDNA clones from brain which code for large proteins in vitro.</title>
        <authorList>
            <person name="Nagase T."/>
            <person name="Nakayama M."/>
            <person name="Nakajima D."/>
            <person name="Kikuno R."/>
            <person name="Ohara O."/>
        </authorList>
    </citation>
    <scope>NUCLEOTIDE SEQUENCE [LARGE SCALE MRNA] (ISOFORM 1)</scope>
    <source>
        <tissue>Brain</tissue>
    </source>
</reference>
<reference key="2">
    <citation type="journal article" date="2007" name="BMC Genomics">
        <title>The full-ORF clone resource of the German cDNA consortium.</title>
        <authorList>
            <person name="Bechtel S."/>
            <person name="Rosenfelder H."/>
            <person name="Duda A."/>
            <person name="Schmidt C.P."/>
            <person name="Ernst U."/>
            <person name="Wellenreuther R."/>
            <person name="Mehrle A."/>
            <person name="Schuster C."/>
            <person name="Bahr A."/>
            <person name="Bloecker H."/>
            <person name="Heubner D."/>
            <person name="Hoerlein A."/>
            <person name="Michel G."/>
            <person name="Wedler H."/>
            <person name="Koehrer K."/>
            <person name="Ottenwaelder B."/>
            <person name="Poustka A."/>
            <person name="Wiemann S."/>
            <person name="Schupp I."/>
        </authorList>
    </citation>
    <scope>NUCLEOTIDE SEQUENCE [LARGE SCALE MRNA] (ISOFORM 2)</scope>
    <source>
        <tissue>Skeletal muscle</tissue>
    </source>
</reference>
<reference key="3">
    <citation type="submission" date="2005-07" db="EMBL/GenBank/DDBJ databases">
        <authorList>
            <person name="Mural R.J."/>
            <person name="Istrail S."/>
            <person name="Sutton G.G."/>
            <person name="Florea L."/>
            <person name="Halpern A.L."/>
            <person name="Mobarry C.M."/>
            <person name="Lippert R."/>
            <person name="Walenz B."/>
            <person name="Shatkay H."/>
            <person name="Dew I."/>
            <person name="Miller J.R."/>
            <person name="Flanigan M.J."/>
            <person name="Edwards N.J."/>
            <person name="Bolanos R."/>
            <person name="Fasulo D."/>
            <person name="Halldorsson B.V."/>
            <person name="Hannenhalli S."/>
            <person name="Turner R."/>
            <person name="Yooseph S."/>
            <person name="Lu F."/>
            <person name="Nusskern D.R."/>
            <person name="Shue B.C."/>
            <person name="Zheng X.H."/>
            <person name="Zhong F."/>
            <person name="Delcher A.L."/>
            <person name="Huson D.H."/>
            <person name="Kravitz S.A."/>
            <person name="Mouchard L."/>
            <person name="Reinert K."/>
            <person name="Remington K.A."/>
            <person name="Clark A.G."/>
            <person name="Waterman M.S."/>
            <person name="Eichler E.E."/>
            <person name="Adams M.D."/>
            <person name="Hunkapiller M.W."/>
            <person name="Myers E.W."/>
            <person name="Venter J.C."/>
        </authorList>
    </citation>
    <scope>NUCLEOTIDE SEQUENCE [LARGE SCALE GENOMIC DNA]</scope>
</reference>
<reference key="4">
    <citation type="journal article" date="2004" name="Genome Res.">
        <title>The status, quality, and expansion of the NIH full-length cDNA project: the Mammalian Gene Collection (MGC).</title>
        <authorList>
            <consortium name="The MGC Project Team"/>
        </authorList>
    </citation>
    <scope>NUCLEOTIDE SEQUENCE [LARGE SCALE MRNA] (ISOFORM 1)</scope>
</reference>
<reference key="5">
    <citation type="journal article" date="1998" name="Genomics">
        <title>Genomic and functional map of the chromosome 14 t(12;14) breakpoint cluster region in uterine leiomyoma.</title>
        <authorList>
            <person name="Lynch R.A."/>
            <person name="Piper M."/>
            <person name="Bankier A."/>
            <person name="Bhugra B."/>
            <person name="Surti U."/>
            <person name="Liu J."/>
            <person name="Buckler A."/>
            <person name="Dear P.H."/>
            <person name="Menon A.G."/>
        </authorList>
    </citation>
    <scope>NUCLEOTIDE SEQUENCE [MRNA] OF 262-942</scope>
    <scope>TISSUE SPECIFICITY</scope>
    <source>
        <tissue>Uterine leiomyoma</tissue>
    </source>
</reference>
<reference key="6">
    <citation type="journal article" date="2006" name="Mol. Cell">
        <title>A family of diverse Cul4-Ddb1-interacting proteins includes Cdt2, which is required for S phase destruction of the replication factor Cdt1.</title>
        <authorList>
            <person name="Jin J."/>
            <person name="Arias E.E."/>
            <person name="Chen J."/>
            <person name="Harper J.W."/>
            <person name="Walter J.C."/>
        </authorList>
    </citation>
    <scope>FUNCTION</scope>
    <scope>INTERACTION WITH DDB1 AND CUL4A</scope>
    <scope>IDENTIFICATION BY MASS SPECTROMETRY</scope>
</reference>
<reference key="7">
    <citation type="journal article" date="2006" name="Nature">
        <title>Molecular architecture and assembly of the DDB1-CUL4A ubiquitin ligase machinery.</title>
        <authorList>
            <person name="Angers S."/>
            <person name="Li T."/>
            <person name="Yi X."/>
            <person name="MacCoss M.J."/>
            <person name="Moon R.T."/>
            <person name="Zheng N."/>
        </authorList>
    </citation>
    <scope>FUNCTION</scope>
</reference>
<reference key="8">
    <citation type="journal article" date="2009" name="Sci. Signal.">
        <title>Quantitative phosphoproteomic analysis of T cell receptor signaling reveals system-wide modulation of protein-protein interactions.</title>
        <authorList>
            <person name="Mayya V."/>
            <person name="Lundgren D.H."/>
            <person name="Hwang S.-I."/>
            <person name="Rezaul K."/>
            <person name="Wu L."/>
            <person name="Eng J.K."/>
            <person name="Rodionov V."/>
            <person name="Han D.K."/>
        </authorList>
    </citation>
    <scope>PHOSPHORYLATION [LARGE SCALE ANALYSIS] AT SER-648 AND SER-651</scope>
    <scope>IDENTIFICATION BY MASS SPECTROMETRY [LARGE SCALE ANALYSIS]</scope>
    <source>
        <tissue>Leukemic T-cell</tissue>
    </source>
</reference>
<reference key="9">
    <citation type="journal article" date="2011" name="BMC Syst. Biol.">
        <title>Initial characterization of the human central proteome.</title>
        <authorList>
            <person name="Burkard T.R."/>
            <person name="Planyavsky M."/>
            <person name="Kaupe I."/>
            <person name="Breitwieser F.P."/>
            <person name="Buerckstuemmer T."/>
            <person name="Bennett K.L."/>
            <person name="Superti-Furga G."/>
            <person name="Colinge J."/>
        </authorList>
    </citation>
    <scope>IDENTIFICATION BY MASS SPECTROMETRY [LARGE SCALE ANALYSIS]</scope>
</reference>
<reference key="10">
    <citation type="journal article" date="2013" name="J. Proteome Res.">
        <title>Toward a comprehensive characterization of a human cancer cell phosphoproteome.</title>
        <authorList>
            <person name="Zhou H."/>
            <person name="Di Palma S."/>
            <person name="Preisinger C."/>
            <person name="Peng M."/>
            <person name="Polat A.N."/>
            <person name="Heck A.J."/>
            <person name="Mohammed S."/>
        </authorList>
    </citation>
    <scope>PHOSPHORYLATION [LARGE SCALE ANALYSIS] AT SER-648</scope>
    <scope>IDENTIFICATION BY MASS SPECTROMETRY [LARGE SCALE ANALYSIS]</scope>
    <source>
        <tissue>Cervix carcinoma</tissue>
    </source>
</reference>
<reference key="11">
    <citation type="journal article" date="2014" name="J. Proteomics">
        <title>An enzyme assisted RP-RPLC approach for in-depth analysis of human liver phosphoproteome.</title>
        <authorList>
            <person name="Bian Y."/>
            <person name="Song C."/>
            <person name="Cheng K."/>
            <person name="Dong M."/>
            <person name="Wang F."/>
            <person name="Huang J."/>
            <person name="Sun D."/>
            <person name="Wang L."/>
            <person name="Ye M."/>
            <person name="Zou H."/>
        </authorList>
    </citation>
    <scope>PHOSPHORYLATION [LARGE SCALE ANALYSIS] AT SER-645; SER-648 AND SER-794</scope>
    <scope>IDENTIFICATION BY MASS SPECTROMETRY [LARGE SCALE ANALYSIS]</scope>
    <source>
        <tissue>Liver</tissue>
    </source>
</reference>
<reference key="12">
    <citation type="journal article" date="2018" name="Nat. Commun.">
        <title>Methylated DNMT1 and E2F1 are targeted for proteolysis by L3MBTL3 and CRL4-DCAF5 ubiquitin ligase.</title>
        <authorList>
            <person name="Leng F."/>
            <person name="Yu J."/>
            <person name="Zhang C."/>
            <person name="Alejo S."/>
            <person name="Hoang N."/>
            <person name="Sun H."/>
            <person name="Lu F."/>
            <person name="Zhang H."/>
        </authorList>
    </citation>
    <scope>FUNCTION</scope>
    <scope>INTERACTION WITH DDB1; CUL4B; DNMT1 AND L3MBTL3</scope>
</reference>
<reference key="13">
    <citation type="journal article" date="2019" name="J. Biol. Chem.">
        <title>Proteolysis of methylated SOX2 protein is regulated by L3MBTL3 and CRL4-DCAF5 ubiquitin ligase.</title>
        <authorList>
            <person name="Zhang C."/>
            <person name="Leng F."/>
            <person name="Saxena L."/>
            <person name="Hoang N."/>
            <person name="Yu J."/>
            <person name="Alejo S."/>
            <person name="Lee L."/>
            <person name="Qi D."/>
            <person name="Lu F."/>
            <person name="Sun H."/>
            <person name="Zhang H."/>
        </authorList>
    </citation>
    <scope>FUNCTION</scope>
</reference>
<dbReference type="EMBL" id="AB058727">
    <property type="protein sequence ID" value="BAB47453.1"/>
    <property type="status" value="ALT_INIT"/>
    <property type="molecule type" value="mRNA"/>
</dbReference>
<dbReference type="EMBL" id="AL391262">
    <property type="status" value="NOT_ANNOTATED_CDS"/>
    <property type="molecule type" value="Genomic_DNA"/>
</dbReference>
<dbReference type="EMBL" id="AL831932">
    <property type="protein sequence ID" value="CAD38589.1"/>
    <property type="molecule type" value="mRNA"/>
</dbReference>
<dbReference type="EMBL" id="AL831823">
    <property type="protein sequence ID" value="CAD38537.2"/>
    <property type="molecule type" value="mRNA"/>
</dbReference>
<dbReference type="EMBL" id="CH471061">
    <property type="protein sequence ID" value="EAW80981.1"/>
    <property type="molecule type" value="Genomic_DNA"/>
</dbReference>
<dbReference type="EMBL" id="CH471061">
    <property type="protein sequence ID" value="EAW80983.1"/>
    <property type="molecule type" value="Genomic_DNA"/>
</dbReference>
<dbReference type="EMBL" id="BC136632">
    <property type="protein sequence ID" value="AAI36633.1"/>
    <property type="molecule type" value="mRNA"/>
</dbReference>
<dbReference type="EMBL" id="AF044774">
    <property type="protein sequence ID" value="AAC08965.1"/>
    <property type="status" value="ALT_FRAME"/>
    <property type="molecule type" value="mRNA"/>
</dbReference>
<dbReference type="CCDS" id="CCDS32106.1">
    <molecule id="Q96JK2-1"/>
</dbReference>
<dbReference type="CCDS" id="CCDS61480.1">
    <molecule id="Q96JK2-2"/>
</dbReference>
<dbReference type="CCDS" id="CCDS61481.1">
    <molecule id="Q96JK2-3"/>
</dbReference>
<dbReference type="RefSeq" id="NP_001271135.1">
    <molecule id="Q96JK2-3"/>
    <property type="nucleotide sequence ID" value="NM_001284206.1"/>
</dbReference>
<dbReference type="RefSeq" id="NP_001271136.1">
    <molecule id="Q96JK2-2"/>
    <property type="nucleotide sequence ID" value="NM_001284207.1"/>
</dbReference>
<dbReference type="RefSeq" id="NP_003852.1">
    <molecule id="Q96JK2-1"/>
    <property type="nucleotide sequence ID" value="NM_003861.3"/>
</dbReference>
<dbReference type="RefSeq" id="XP_016877223.1">
    <property type="nucleotide sequence ID" value="XM_017021734.1"/>
</dbReference>
<dbReference type="RefSeq" id="XP_016877224.1">
    <property type="nucleotide sequence ID" value="XM_017021735.1"/>
</dbReference>
<dbReference type="PDB" id="3I89">
    <property type="method" value="X-ray"/>
    <property type="resolution" value="3.00 A"/>
    <property type="chains" value="B=13-25"/>
</dbReference>
<dbReference type="PDB" id="8TL6">
    <property type="method" value="EM"/>
    <property type="resolution" value="2.63 A"/>
    <property type="chains" value="B=1-942"/>
</dbReference>
<dbReference type="PDBsum" id="3I89"/>
<dbReference type="PDBsum" id="8TL6"/>
<dbReference type="EMDB" id="EMD-41363"/>
<dbReference type="SMR" id="Q96JK2"/>
<dbReference type="BioGRID" id="114343">
    <property type="interactions" value="100"/>
</dbReference>
<dbReference type="ComplexPortal" id="CPX-2782">
    <property type="entry name" value="CRL4-DCAF5 E3 ubiquitin ligase complex, CUL4A variant"/>
</dbReference>
<dbReference type="ComplexPortal" id="CPX-2783">
    <property type="entry name" value="CRL4-DCAF5 E3 ubiquitin ligase complex, CUL4B variant"/>
</dbReference>
<dbReference type="DIP" id="DIP-48763N"/>
<dbReference type="FunCoup" id="Q96JK2">
    <property type="interactions" value="2987"/>
</dbReference>
<dbReference type="IntAct" id="Q96JK2">
    <property type="interactions" value="74"/>
</dbReference>
<dbReference type="MINT" id="Q96JK2"/>
<dbReference type="STRING" id="9606.ENSP00000341351"/>
<dbReference type="GlyGen" id="Q96JK2">
    <property type="glycosylation" value="1 site"/>
</dbReference>
<dbReference type="iPTMnet" id="Q96JK2"/>
<dbReference type="PhosphoSitePlus" id="Q96JK2"/>
<dbReference type="BioMuta" id="DCAF5"/>
<dbReference type="DMDM" id="47606200"/>
<dbReference type="jPOST" id="Q96JK2"/>
<dbReference type="MassIVE" id="Q96JK2"/>
<dbReference type="PaxDb" id="9606-ENSP00000341351"/>
<dbReference type="PeptideAtlas" id="Q96JK2"/>
<dbReference type="ProteomicsDB" id="33252"/>
<dbReference type="ProteomicsDB" id="76975">
    <molecule id="Q96JK2-1"/>
</dbReference>
<dbReference type="ProteomicsDB" id="76976">
    <molecule id="Q96JK2-2"/>
</dbReference>
<dbReference type="Pumba" id="Q96JK2"/>
<dbReference type="Antibodypedia" id="54896">
    <property type="antibodies" value="17 antibodies from 9 providers"/>
</dbReference>
<dbReference type="DNASU" id="8816"/>
<dbReference type="Ensembl" id="ENST00000341516.10">
    <molecule id="Q96JK2-1"/>
    <property type="protein sequence ID" value="ENSP00000341351.5"/>
    <property type="gene ID" value="ENSG00000139990.18"/>
</dbReference>
<dbReference type="Ensembl" id="ENST00000554215.5">
    <molecule id="Q96JK2-2"/>
    <property type="protein sequence ID" value="ENSP00000451551.1"/>
    <property type="gene ID" value="ENSG00000139990.18"/>
</dbReference>
<dbReference type="Ensembl" id="ENST00000556847.5">
    <molecule id="Q96JK2-2"/>
    <property type="protein sequence ID" value="ENSP00000452052.1"/>
    <property type="gene ID" value="ENSG00000139990.18"/>
</dbReference>
<dbReference type="Ensembl" id="ENST00000557386.5">
    <molecule id="Q96JK2-3"/>
    <property type="protein sequence ID" value="ENSP00000451845.1"/>
    <property type="gene ID" value="ENSG00000139990.18"/>
</dbReference>
<dbReference type="GeneID" id="8816"/>
<dbReference type="KEGG" id="hsa:8816"/>
<dbReference type="MANE-Select" id="ENST00000341516.10">
    <property type="protein sequence ID" value="ENSP00000341351.5"/>
    <property type="RefSeq nucleotide sequence ID" value="NM_003861.3"/>
    <property type="RefSeq protein sequence ID" value="NP_003852.1"/>
</dbReference>
<dbReference type="UCSC" id="uc001xkp.4">
    <molecule id="Q96JK2-1"/>
    <property type="organism name" value="human"/>
</dbReference>
<dbReference type="AGR" id="HGNC:20224"/>
<dbReference type="CTD" id="8816"/>
<dbReference type="DisGeNET" id="8816"/>
<dbReference type="GeneCards" id="DCAF5"/>
<dbReference type="HGNC" id="HGNC:20224">
    <property type="gene designation" value="DCAF5"/>
</dbReference>
<dbReference type="HPA" id="ENSG00000139990">
    <property type="expression patterns" value="Low tissue specificity"/>
</dbReference>
<dbReference type="MIM" id="603812">
    <property type="type" value="gene"/>
</dbReference>
<dbReference type="neXtProt" id="NX_Q96JK2"/>
<dbReference type="OpenTargets" id="ENSG00000139990"/>
<dbReference type="PharmGKB" id="PA165478844"/>
<dbReference type="VEuPathDB" id="HostDB:ENSG00000139990"/>
<dbReference type="eggNOG" id="KOG4227">
    <property type="taxonomic scope" value="Eukaryota"/>
</dbReference>
<dbReference type="GeneTree" id="ENSGT00950000182900"/>
<dbReference type="HOGENOM" id="CLU_018663_0_0_1"/>
<dbReference type="InParanoid" id="Q96JK2"/>
<dbReference type="OMA" id="NVQEHEC"/>
<dbReference type="OrthoDB" id="5573735at2759"/>
<dbReference type="PAN-GO" id="Q96JK2">
    <property type="GO annotations" value="2 GO annotations based on evolutionary models"/>
</dbReference>
<dbReference type="PhylomeDB" id="Q96JK2"/>
<dbReference type="TreeFam" id="TF320710"/>
<dbReference type="PathwayCommons" id="Q96JK2"/>
<dbReference type="Reactome" id="R-HSA-8951664">
    <property type="pathway name" value="Neddylation"/>
</dbReference>
<dbReference type="SignaLink" id="Q96JK2"/>
<dbReference type="UniPathway" id="UPA00143"/>
<dbReference type="BioGRID-ORCS" id="8816">
    <property type="hits" value="24 hits in 1196 CRISPR screens"/>
</dbReference>
<dbReference type="CD-CODE" id="232F8A39">
    <property type="entry name" value="P-body"/>
</dbReference>
<dbReference type="ChiTaRS" id="DCAF5">
    <property type="organism name" value="human"/>
</dbReference>
<dbReference type="EvolutionaryTrace" id="Q96JK2"/>
<dbReference type="GenomeRNAi" id="8816"/>
<dbReference type="Pharos" id="Q96JK2">
    <property type="development level" value="Tdark"/>
</dbReference>
<dbReference type="PRO" id="PR:Q96JK2"/>
<dbReference type="Proteomes" id="UP000005640">
    <property type="component" value="Chromosome 14"/>
</dbReference>
<dbReference type="RNAct" id="Q96JK2">
    <property type="molecule type" value="protein"/>
</dbReference>
<dbReference type="Bgee" id="ENSG00000139990">
    <property type="expression patterns" value="Expressed in secondary oocyte and 184 other cell types or tissues"/>
</dbReference>
<dbReference type="ExpressionAtlas" id="Q96JK2">
    <property type="expression patterns" value="baseline and differential"/>
</dbReference>
<dbReference type="GO" id="GO:0080008">
    <property type="term" value="C:Cul4-RING E3 ubiquitin ligase complex"/>
    <property type="evidence" value="ECO:0000314"/>
    <property type="project" value="UniProtKB"/>
</dbReference>
<dbReference type="GO" id="GO:0005737">
    <property type="term" value="C:cytoplasm"/>
    <property type="evidence" value="ECO:0000318"/>
    <property type="project" value="GO_Central"/>
</dbReference>
<dbReference type="GO" id="GO:0005654">
    <property type="term" value="C:nucleoplasm"/>
    <property type="evidence" value="ECO:0000304"/>
    <property type="project" value="Reactome"/>
</dbReference>
<dbReference type="GO" id="GO:0045717">
    <property type="term" value="P:negative regulation of fatty acid biosynthetic process"/>
    <property type="evidence" value="ECO:0000318"/>
    <property type="project" value="GO_Central"/>
</dbReference>
<dbReference type="GO" id="GO:0016567">
    <property type="term" value="P:protein ubiquitination"/>
    <property type="evidence" value="ECO:0007669"/>
    <property type="project" value="UniProtKB-UniPathway"/>
</dbReference>
<dbReference type="FunFam" id="2.130.10.10:FF:000297">
    <property type="entry name" value="DDB1- and CUL4-associated factor 5 isoform X1"/>
    <property type="match status" value="1"/>
</dbReference>
<dbReference type="FunFam" id="2.130.10.10:FF:000363">
    <property type="entry name" value="DDB1- and CUL4-associated factor 5 isoform X1"/>
    <property type="match status" value="1"/>
</dbReference>
<dbReference type="Gene3D" id="2.130.10.10">
    <property type="entry name" value="YVTN repeat-like/Quinoprotein amine dehydrogenase"/>
    <property type="match status" value="3"/>
</dbReference>
<dbReference type="InterPro" id="IPR045151">
    <property type="entry name" value="DCAF8"/>
</dbReference>
<dbReference type="InterPro" id="IPR015943">
    <property type="entry name" value="WD40/YVTN_repeat-like_dom_sf"/>
</dbReference>
<dbReference type="InterPro" id="IPR036322">
    <property type="entry name" value="WD40_repeat_dom_sf"/>
</dbReference>
<dbReference type="InterPro" id="IPR001680">
    <property type="entry name" value="WD40_rpt"/>
</dbReference>
<dbReference type="PANTHER" id="PTHR15574:SF43">
    <property type="entry name" value="DDB1- AND CUL4-ASSOCIATED FACTOR 5"/>
    <property type="match status" value="1"/>
</dbReference>
<dbReference type="PANTHER" id="PTHR15574">
    <property type="entry name" value="WD REPEAT DOMAIN-CONTAINING FAMILY"/>
    <property type="match status" value="1"/>
</dbReference>
<dbReference type="Pfam" id="PF00400">
    <property type="entry name" value="WD40"/>
    <property type="match status" value="4"/>
</dbReference>
<dbReference type="SMART" id="SM00320">
    <property type="entry name" value="WD40"/>
    <property type="match status" value="6"/>
</dbReference>
<dbReference type="SUPFAM" id="SSF50978">
    <property type="entry name" value="WD40 repeat-like"/>
    <property type="match status" value="1"/>
</dbReference>
<dbReference type="PROSITE" id="PS50082">
    <property type="entry name" value="WD_REPEATS_2"/>
    <property type="match status" value="3"/>
</dbReference>
<dbReference type="PROSITE" id="PS50294">
    <property type="entry name" value="WD_REPEATS_REGION"/>
    <property type="match status" value="1"/>
</dbReference>
<proteinExistence type="evidence at protein level"/>
<sequence>MKRRAGLGGSMRSVVGFLSQRGLHGDPLLTQDFQRRRLRGCRNLYKKDLLGHFGCVNAIEFSNNGGQWLVSGGDDRRVLLWHMEQAIHSRVKPIQLKGEHHSNIFCLAFNSGNTKVFSGGNDEQVILHDVESSETLDVFAHEDAVYGLSVSPVNDNIFASSSDDGRVLIWDIRESPHGEPFCLANYPSAFHSVMFNPVEPRLLATANSKEGVGLWDIRKPQSSLLRYGGNLSLQSAMSVRFNSNGTQLLALRRRLPPVLYDIHSRLPVFQFDNQGYFNSCTMKSCCFAGDRDQYILSGSDDFNLYMWRIPADPEAGGIGRVVNGAFMVLKGHRSIVNQVRFNPHTYMICSSGVEKIIKIWSPYKQPGCTGDLDGRIEDDSRCLYTHEEYISLVLNSGSGLSHDYANQSVQEDPRMMAFFDSLVRREIEGWSSDSDSDLSESTILQLHAGVSERSGYTDSESSASLPRSPPPTVDESADNAFHLGPLRVTTTNTVASTPPTPTCEDAASRQQRLSALRRYQDKRLLALSNESDSEENVCEVELDTDLFPRPRSPSPEDESSSSSSSSSSEDEEELNERRASTWQRNAMRRRQKTTREDKPSAPIKPTNTYIGEDNYDYPQIKVDDLSSSPTSSPERSTSTLEIQPSRASPTSDIESVERKIYKAYKWLRYSYISYSNNKDGETSLVTGEADEGRAGTSHKDNPAPSSSKEACLNIAMAQRNQDLPPEGCSKDTFKEETPRTPSNGPGHEHSSHAWAEVPEGTSQDTGNSGSVEHPFETKKLNGKALSSRAEEPPSPPVPKASGSTLNSGSGNCPRTQSDDSEERSLETICANHNNGRLHPRPPHPHNNGQNLGELEVVAYSSPGHSDTDRDNSSLTGTLLHKDCCGSEMACETPNAGTREDPTDTPATDSSRAVHGHSGLKRQRIELEDTDSENSSSEKKLKT</sequence>
<feature type="chain" id="PRO_0000051369" description="DDB1- and CUL4-associated factor 5">
    <location>
        <begin position="1"/>
        <end position="942"/>
    </location>
</feature>
<feature type="repeat" description="WD 1">
    <location>
        <begin position="51"/>
        <end position="91"/>
    </location>
</feature>
<feature type="repeat" description="WD 2">
    <location>
        <begin position="99"/>
        <end position="139"/>
    </location>
</feature>
<feature type="repeat" description="WD 3">
    <location>
        <begin position="140"/>
        <end position="180"/>
    </location>
</feature>
<feature type="repeat" description="WD 4">
    <location>
        <begin position="185"/>
        <end position="225"/>
    </location>
</feature>
<feature type="repeat" description="WD 5">
    <location>
        <begin position="277"/>
        <end position="317"/>
    </location>
</feature>
<feature type="repeat" description="WD 6">
    <location>
        <begin position="331"/>
        <end position="370"/>
    </location>
</feature>
<feature type="region of interest" description="Disordered" evidence="2">
    <location>
        <begin position="449"/>
        <end position="478"/>
    </location>
</feature>
<feature type="region of interest" description="Disordered" evidence="2">
    <location>
        <begin position="490"/>
        <end position="509"/>
    </location>
</feature>
<feature type="region of interest" description="Disordered" evidence="2">
    <location>
        <begin position="544"/>
        <end position="655"/>
    </location>
</feature>
<feature type="region of interest" description="Disordered" evidence="2">
    <location>
        <begin position="676"/>
        <end position="824"/>
    </location>
</feature>
<feature type="region of interest" description="Disordered" evidence="2">
    <location>
        <begin position="889"/>
        <end position="942"/>
    </location>
</feature>
<feature type="compositionally biased region" description="Polar residues" evidence="2">
    <location>
        <begin position="454"/>
        <end position="465"/>
    </location>
</feature>
<feature type="compositionally biased region" description="Low complexity" evidence="2">
    <location>
        <begin position="625"/>
        <end position="641"/>
    </location>
</feature>
<feature type="compositionally biased region" description="Basic and acidic residues" evidence="2">
    <location>
        <begin position="690"/>
        <end position="701"/>
    </location>
</feature>
<feature type="compositionally biased region" description="Basic and acidic residues" evidence="2">
    <location>
        <begin position="728"/>
        <end position="738"/>
    </location>
</feature>
<feature type="compositionally biased region" description="Polar residues" evidence="2">
    <location>
        <begin position="760"/>
        <end position="770"/>
    </location>
</feature>
<feature type="compositionally biased region" description="Polar residues" evidence="2">
    <location>
        <begin position="801"/>
        <end position="815"/>
    </location>
</feature>
<feature type="modified residue" description="Phosphothreonine" evidence="1">
    <location>
        <position position="500"/>
    </location>
</feature>
<feature type="modified residue" description="Phosphoserine" evidence="1">
    <location>
        <position position="531"/>
    </location>
</feature>
<feature type="modified residue" description="Phosphoserine" evidence="1">
    <location>
        <position position="533"/>
    </location>
</feature>
<feature type="modified residue" description="Phosphoserine" evidence="1">
    <location>
        <position position="626"/>
    </location>
</feature>
<feature type="modified residue" description="Phosphoserine" evidence="1">
    <location>
        <position position="628"/>
    </location>
</feature>
<feature type="modified residue" description="Phosphoserine" evidence="12">
    <location>
        <position position="645"/>
    </location>
</feature>
<feature type="modified residue" description="Phosphoserine" evidence="10 11 12">
    <location>
        <position position="648"/>
    </location>
</feature>
<feature type="modified residue" description="Phosphoserine" evidence="10">
    <location>
        <position position="651"/>
    </location>
</feature>
<feature type="modified residue" description="Phosphoserine" evidence="12">
    <location>
        <position position="794"/>
    </location>
</feature>
<feature type="splice variant" id="VSP_010386" description="In isoform 2." evidence="8">
    <location>
        <begin position="1"/>
        <end position="82"/>
    </location>
</feature>
<feature type="splice variant" id="VSP_055647" description="In isoform 3." evidence="9">
    <location>
        <position position="132"/>
    </location>
</feature>
<feature type="sequence conflict" description="In Ref. 2." evidence="9" ref="2">
    <original>S</original>
    <variation>F</variation>
    <location>
        <position position="149"/>
    </location>
</feature>
<feature type="sequence conflict" description="In Ref. 5; AAC08965." evidence="9" ref="5">
    <original>Y</original>
    <variation>H</variation>
    <location>
        <position position="404"/>
    </location>
</feature>
<feature type="sequence conflict" description="In Ref. 5; AAC08965." evidence="9" ref="5">
    <original>N</original>
    <variation>D</variation>
    <location>
        <position position="607"/>
    </location>
</feature>
<feature type="sequence conflict" description="In Ref. 5; AAC08965." evidence="9" ref="5">
    <original>RLHPRP</original>
    <variation>TLHLS</variation>
    <location>
        <begin position="836"/>
        <end position="841"/>
    </location>
</feature>
<feature type="helix" evidence="13">
    <location>
        <begin position="14"/>
        <end position="24"/>
    </location>
</feature>
<feature type="helix" evidence="13">
    <location>
        <begin position="29"/>
        <end position="39"/>
    </location>
</feature>
<feature type="strand" evidence="13">
    <location>
        <begin position="45"/>
        <end position="49"/>
    </location>
</feature>
<feature type="strand" evidence="13">
    <location>
        <begin position="56"/>
        <end position="61"/>
    </location>
</feature>
<feature type="turn" evidence="13">
    <location>
        <begin position="63"/>
        <end position="65"/>
    </location>
</feature>
<feature type="strand" evidence="13">
    <location>
        <begin position="68"/>
        <end position="73"/>
    </location>
</feature>
<feature type="strand" evidence="13">
    <location>
        <begin position="78"/>
        <end position="82"/>
    </location>
</feature>
<feature type="helix" evidence="13">
    <location>
        <begin position="83"/>
        <end position="87"/>
    </location>
</feature>
<feature type="strand" evidence="13">
    <location>
        <begin position="106"/>
        <end position="109"/>
    </location>
</feature>
<feature type="strand" evidence="13">
    <location>
        <begin position="116"/>
        <end position="119"/>
    </location>
</feature>
<feature type="strand" evidence="13">
    <location>
        <begin position="121"/>
        <end position="129"/>
    </location>
</feature>
<feature type="turn" evidence="13">
    <location>
        <begin position="130"/>
        <end position="133"/>
    </location>
</feature>
<feature type="strand" evidence="13">
    <location>
        <begin position="134"/>
        <end position="140"/>
    </location>
</feature>
<feature type="strand" evidence="13">
    <location>
        <begin position="145"/>
        <end position="150"/>
    </location>
</feature>
<feature type="strand" evidence="13">
    <location>
        <begin position="157"/>
        <end position="162"/>
    </location>
</feature>
<feature type="strand" evidence="13">
    <location>
        <begin position="165"/>
        <end position="171"/>
    </location>
</feature>
<feature type="helix" evidence="13">
    <location>
        <begin position="172"/>
        <end position="174"/>
    </location>
</feature>
<feature type="strand" evidence="13">
    <location>
        <begin position="181"/>
        <end position="185"/>
    </location>
</feature>
<feature type="strand" evidence="13">
    <location>
        <begin position="190"/>
        <end position="195"/>
    </location>
</feature>
<feature type="strand" evidence="13">
    <location>
        <begin position="202"/>
        <end position="207"/>
    </location>
</feature>
<feature type="turn" evidence="13">
    <location>
        <begin position="208"/>
        <end position="210"/>
    </location>
</feature>
<feature type="strand" evidence="13">
    <location>
        <begin position="211"/>
        <end position="216"/>
    </location>
</feature>
<feature type="strand" evidence="13">
    <location>
        <begin position="220"/>
        <end position="222"/>
    </location>
</feature>
<feature type="strand" evidence="13">
    <location>
        <begin position="224"/>
        <end position="227"/>
    </location>
</feature>
<feature type="strand" evidence="13">
    <location>
        <begin position="237"/>
        <end position="241"/>
    </location>
</feature>
<feature type="strand" evidence="13">
    <location>
        <begin position="247"/>
        <end position="251"/>
    </location>
</feature>
<feature type="strand" evidence="13">
    <location>
        <begin position="253"/>
        <end position="255"/>
    </location>
</feature>
<feature type="strand" evidence="13">
    <location>
        <begin position="258"/>
        <end position="261"/>
    </location>
</feature>
<feature type="turn" evidence="13">
    <location>
        <begin position="262"/>
        <end position="264"/>
    </location>
</feature>
<feature type="strand" evidence="13">
    <location>
        <begin position="266"/>
        <end position="272"/>
    </location>
</feature>
<feature type="strand" evidence="13">
    <location>
        <begin position="285"/>
        <end position="288"/>
    </location>
</feature>
<feature type="turn" evidence="13">
    <location>
        <begin position="289"/>
        <end position="292"/>
    </location>
</feature>
<feature type="strand" evidence="13">
    <location>
        <begin position="294"/>
        <end position="298"/>
    </location>
</feature>
<feature type="strand" evidence="13">
    <location>
        <begin position="304"/>
        <end position="308"/>
    </location>
</feature>
<feature type="strand" evidence="13">
    <location>
        <begin position="321"/>
        <end position="324"/>
    </location>
</feature>
<feature type="strand" evidence="13">
    <location>
        <begin position="326"/>
        <end position="329"/>
    </location>
</feature>
<feature type="strand" evidence="13">
    <location>
        <begin position="336"/>
        <end position="342"/>
    </location>
</feature>
<feature type="turn" evidence="13">
    <location>
        <begin position="343"/>
        <end position="346"/>
    </location>
</feature>
<feature type="strand" evidence="13">
    <location>
        <begin position="347"/>
        <end position="363"/>
    </location>
</feature>
<protein>
    <recommendedName>
        <fullName>DDB1- and CUL4-associated factor 5</fullName>
    </recommendedName>
    <alternativeName>
        <fullName>Breakpoint cluster region protein 2</fullName>
        <shortName>BCRP2</shortName>
    </alternativeName>
    <alternativeName>
        <fullName>WD repeat-containing protein 22</fullName>
    </alternativeName>
</protein>
<name>DCAF5_HUMAN</name>
<gene>
    <name type="primary">DCAF5</name>
    <name type="synonym">BCRG2</name>
    <name type="synonym">KIAA1824</name>
    <name type="synonym">WDR22</name>
</gene>